<evidence type="ECO:0000255" key="1">
    <source>
        <dbReference type="HAMAP-Rule" id="MF_00815"/>
    </source>
</evidence>
<keyword id="KW-0066">ATP synthesis</keyword>
<keyword id="KW-0997">Cell inner membrane</keyword>
<keyword id="KW-1003">Cell membrane</keyword>
<keyword id="KW-0139">CF(1)</keyword>
<keyword id="KW-0375">Hydrogen ion transport</keyword>
<keyword id="KW-0406">Ion transport</keyword>
<keyword id="KW-0472">Membrane</keyword>
<keyword id="KW-0813">Transport</keyword>
<protein>
    <recommendedName>
        <fullName evidence="1">ATP synthase gamma chain</fullName>
    </recommendedName>
    <alternativeName>
        <fullName evidence="1">ATP synthase F1 sector gamma subunit</fullName>
    </alternativeName>
    <alternativeName>
        <fullName evidence="1">F-ATPase gamma subunit</fullName>
    </alternativeName>
</protein>
<accession>B2T7K1</accession>
<feature type="chain" id="PRO_1000134121" description="ATP synthase gamma chain">
    <location>
        <begin position="1"/>
        <end position="294"/>
    </location>
</feature>
<sequence length="294" mass="32349">MAGMKEIRGKIKSVQNTRKITKAMEMVAASKMRRAQERMRAARPYADKVRDIAAHMSRANPEYRHPFMVSNEGAKAAGIILVTTDKGLCGGMNTNVLRASLQKFKELEGQGKTIEATAIGTKGLGFLNRLRAKVVSNVVHLGDTPHLEKLIGAVKVQLDLYSEGKVSAVYLAYTRFVNTMKQEPVIEQLLPLSADQFERKEEDGATPSTQWDYIYEPDAQAVVDELLVRYVEALVYQAVAENMASEQSARMVAMKAASDNAKTVINELQLVYNKSRQAAITKELSEIVGGAAAV</sequence>
<gene>
    <name evidence="1" type="primary">atpG</name>
    <name type="ordered locus">Bphyt_3895</name>
</gene>
<proteinExistence type="inferred from homology"/>
<reference key="1">
    <citation type="journal article" date="2011" name="J. Bacteriol.">
        <title>Complete genome sequence of the plant growth-promoting endophyte Burkholderia phytofirmans strain PsJN.</title>
        <authorList>
            <person name="Weilharter A."/>
            <person name="Mitter B."/>
            <person name="Shin M.V."/>
            <person name="Chain P.S."/>
            <person name="Nowak J."/>
            <person name="Sessitsch A."/>
        </authorList>
    </citation>
    <scope>NUCLEOTIDE SEQUENCE [LARGE SCALE GENOMIC DNA]</scope>
    <source>
        <strain>DSM 17436 / LMG 22146 / PsJN</strain>
    </source>
</reference>
<name>ATPG_PARPJ</name>
<dbReference type="EMBL" id="CP001052">
    <property type="protein sequence ID" value="ACD18282.1"/>
    <property type="molecule type" value="Genomic_DNA"/>
</dbReference>
<dbReference type="RefSeq" id="WP_012434802.1">
    <property type="nucleotide sequence ID" value="NC_010681.1"/>
</dbReference>
<dbReference type="SMR" id="B2T7K1"/>
<dbReference type="STRING" id="398527.Bphyt_3895"/>
<dbReference type="GeneID" id="97308329"/>
<dbReference type="KEGG" id="bpy:Bphyt_3895"/>
<dbReference type="eggNOG" id="COG0224">
    <property type="taxonomic scope" value="Bacteria"/>
</dbReference>
<dbReference type="HOGENOM" id="CLU_050669_0_1_4"/>
<dbReference type="OrthoDB" id="9812769at2"/>
<dbReference type="Proteomes" id="UP000001739">
    <property type="component" value="Chromosome 1"/>
</dbReference>
<dbReference type="GO" id="GO:0005886">
    <property type="term" value="C:plasma membrane"/>
    <property type="evidence" value="ECO:0007669"/>
    <property type="project" value="UniProtKB-SubCell"/>
</dbReference>
<dbReference type="GO" id="GO:0045259">
    <property type="term" value="C:proton-transporting ATP synthase complex"/>
    <property type="evidence" value="ECO:0007669"/>
    <property type="project" value="UniProtKB-KW"/>
</dbReference>
<dbReference type="GO" id="GO:0005524">
    <property type="term" value="F:ATP binding"/>
    <property type="evidence" value="ECO:0007669"/>
    <property type="project" value="UniProtKB-UniRule"/>
</dbReference>
<dbReference type="GO" id="GO:0046933">
    <property type="term" value="F:proton-transporting ATP synthase activity, rotational mechanism"/>
    <property type="evidence" value="ECO:0007669"/>
    <property type="project" value="UniProtKB-UniRule"/>
</dbReference>
<dbReference type="GO" id="GO:0042777">
    <property type="term" value="P:proton motive force-driven plasma membrane ATP synthesis"/>
    <property type="evidence" value="ECO:0007669"/>
    <property type="project" value="UniProtKB-UniRule"/>
</dbReference>
<dbReference type="CDD" id="cd12151">
    <property type="entry name" value="F1-ATPase_gamma"/>
    <property type="match status" value="1"/>
</dbReference>
<dbReference type="FunFam" id="1.10.287.80:FF:000005">
    <property type="entry name" value="ATP synthase gamma chain"/>
    <property type="match status" value="1"/>
</dbReference>
<dbReference type="Gene3D" id="3.40.1380.10">
    <property type="match status" value="1"/>
</dbReference>
<dbReference type="Gene3D" id="1.10.287.80">
    <property type="entry name" value="ATP synthase, gamma subunit, helix hairpin domain"/>
    <property type="match status" value="1"/>
</dbReference>
<dbReference type="HAMAP" id="MF_00815">
    <property type="entry name" value="ATP_synth_gamma_bact"/>
    <property type="match status" value="1"/>
</dbReference>
<dbReference type="InterPro" id="IPR035968">
    <property type="entry name" value="ATP_synth_F1_ATPase_gsu"/>
</dbReference>
<dbReference type="InterPro" id="IPR000131">
    <property type="entry name" value="ATP_synth_F1_gsu"/>
</dbReference>
<dbReference type="InterPro" id="IPR023632">
    <property type="entry name" value="ATP_synth_F1_gsu_CS"/>
</dbReference>
<dbReference type="NCBIfam" id="TIGR01146">
    <property type="entry name" value="ATPsyn_F1gamma"/>
    <property type="match status" value="1"/>
</dbReference>
<dbReference type="NCBIfam" id="NF004144">
    <property type="entry name" value="PRK05621.1-1"/>
    <property type="match status" value="1"/>
</dbReference>
<dbReference type="PANTHER" id="PTHR11693">
    <property type="entry name" value="ATP SYNTHASE GAMMA CHAIN"/>
    <property type="match status" value="1"/>
</dbReference>
<dbReference type="PANTHER" id="PTHR11693:SF22">
    <property type="entry name" value="ATP SYNTHASE SUBUNIT GAMMA, MITOCHONDRIAL"/>
    <property type="match status" value="1"/>
</dbReference>
<dbReference type="Pfam" id="PF00231">
    <property type="entry name" value="ATP-synt"/>
    <property type="match status" value="1"/>
</dbReference>
<dbReference type="PRINTS" id="PR00126">
    <property type="entry name" value="ATPASEGAMMA"/>
</dbReference>
<dbReference type="SUPFAM" id="SSF52943">
    <property type="entry name" value="ATP synthase (F1-ATPase), gamma subunit"/>
    <property type="match status" value="1"/>
</dbReference>
<dbReference type="PROSITE" id="PS00153">
    <property type="entry name" value="ATPASE_GAMMA"/>
    <property type="match status" value="1"/>
</dbReference>
<organism>
    <name type="scientific">Paraburkholderia phytofirmans (strain DSM 17436 / LMG 22146 / PsJN)</name>
    <name type="common">Burkholderia phytofirmans</name>
    <dbReference type="NCBI Taxonomy" id="398527"/>
    <lineage>
        <taxon>Bacteria</taxon>
        <taxon>Pseudomonadati</taxon>
        <taxon>Pseudomonadota</taxon>
        <taxon>Betaproteobacteria</taxon>
        <taxon>Burkholderiales</taxon>
        <taxon>Burkholderiaceae</taxon>
        <taxon>Paraburkholderia</taxon>
    </lineage>
</organism>
<comment type="function">
    <text evidence="1">Produces ATP from ADP in the presence of a proton gradient across the membrane. The gamma chain is believed to be important in regulating ATPase activity and the flow of protons through the CF(0) complex.</text>
</comment>
<comment type="subunit">
    <text evidence="1">F-type ATPases have 2 components, CF(1) - the catalytic core - and CF(0) - the membrane proton channel. CF(1) has five subunits: alpha(3), beta(3), gamma(1), delta(1), epsilon(1). CF(0) has three main subunits: a, b and c.</text>
</comment>
<comment type="subcellular location">
    <subcellularLocation>
        <location evidence="1">Cell inner membrane</location>
        <topology evidence="1">Peripheral membrane protein</topology>
    </subcellularLocation>
</comment>
<comment type="similarity">
    <text evidence="1">Belongs to the ATPase gamma chain family.</text>
</comment>